<gene>
    <name evidence="1" type="primary">rplW</name>
    <name type="ordered locus">CBO3478</name>
    <name type="ordered locus">CLC_3423</name>
</gene>
<dbReference type="EMBL" id="CP000727">
    <property type="protein sequence ID" value="ABS37179.1"/>
    <property type="molecule type" value="Genomic_DNA"/>
</dbReference>
<dbReference type="EMBL" id="AM412317">
    <property type="protein sequence ID" value="CAL85039.1"/>
    <property type="molecule type" value="Genomic_DNA"/>
</dbReference>
<dbReference type="RefSeq" id="WP_003357444.1">
    <property type="nucleotide sequence ID" value="NC_009698.1"/>
</dbReference>
<dbReference type="RefSeq" id="YP_001255960.1">
    <property type="nucleotide sequence ID" value="NC_009495.1"/>
</dbReference>
<dbReference type="RefSeq" id="YP_001389201.1">
    <property type="nucleotide sequence ID" value="NC_009698.1"/>
</dbReference>
<dbReference type="SMR" id="A5I7K4"/>
<dbReference type="GeneID" id="92940248"/>
<dbReference type="KEGG" id="cbh:CLC_3423"/>
<dbReference type="KEGG" id="cbo:CBO3478"/>
<dbReference type="PATRIC" id="fig|413999.7.peg.3455"/>
<dbReference type="HOGENOM" id="CLU_037562_3_2_9"/>
<dbReference type="PRO" id="PR:A5I7K4"/>
<dbReference type="Proteomes" id="UP000001986">
    <property type="component" value="Chromosome"/>
</dbReference>
<dbReference type="GO" id="GO:0022625">
    <property type="term" value="C:cytosolic large ribosomal subunit"/>
    <property type="evidence" value="ECO:0000318"/>
    <property type="project" value="GO_Central"/>
</dbReference>
<dbReference type="GO" id="GO:0019843">
    <property type="term" value="F:rRNA binding"/>
    <property type="evidence" value="ECO:0007669"/>
    <property type="project" value="UniProtKB-UniRule"/>
</dbReference>
<dbReference type="GO" id="GO:0003735">
    <property type="term" value="F:structural constituent of ribosome"/>
    <property type="evidence" value="ECO:0000318"/>
    <property type="project" value="GO_Central"/>
</dbReference>
<dbReference type="GO" id="GO:0006412">
    <property type="term" value="P:translation"/>
    <property type="evidence" value="ECO:0007669"/>
    <property type="project" value="UniProtKB-UniRule"/>
</dbReference>
<dbReference type="FunFam" id="3.30.70.330:FF:000001">
    <property type="entry name" value="50S ribosomal protein L23"/>
    <property type="match status" value="1"/>
</dbReference>
<dbReference type="Gene3D" id="3.30.70.330">
    <property type="match status" value="1"/>
</dbReference>
<dbReference type="HAMAP" id="MF_01369_B">
    <property type="entry name" value="Ribosomal_uL23_B"/>
    <property type="match status" value="1"/>
</dbReference>
<dbReference type="InterPro" id="IPR012677">
    <property type="entry name" value="Nucleotide-bd_a/b_plait_sf"/>
</dbReference>
<dbReference type="InterPro" id="IPR013025">
    <property type="entry name" value="Ribosomal_uL23-like"/>
</dbReference>
<dbReference type="InterPro" id="IPR012678">
    <property type="entry name" value="Ribosomal_uL23/eL15/eS24_sf"/>
</dbReference>
<dbReference type="InterPro" id="IPR001014">
    <property type="entry name" value="Ribosomal_uL23_CS"/>
</dbReference>
<dbReference type="NCBIfam" id="NF004363">
    <property type="entry name" value="PRK05738.2-4"/>
    <property type="match status" value="1"/>
</dbReference>
<dbReference type="PANTHER" id="PTHR11620">
    <property type="entry name" value="60S RIBOSOMAL PROTEIN L23A"/>
    <property type="match status" value="1"/>
</dbReference>
<dbReference type="Pfam" id="PF00276">
    <property type="entry name" value="Ribosomal_L23"/>
    <property type="match status" value="1"/>
</dbReference>
<dbReference type="SUPFAM" id="SSF54189">
    <property type="entry name" value="Ribosomal proteins S24e, L23 and L15e"/>
    <property type="match status" value="1"/>
</dbReference>
<dbReference type="PROSITE" id="PS00050">
    <property type="entry name" value="RIBOSOMAL_L23"/>
    <property type="match status" value="1"/>
</dbReference>
<proteinExistence type="inferred from homology"/>
<keyword id="KW-1185">Reference proteome</keyword>
<keyword id="KW-0687">Ribonucleoprotein</keyword>
<keyword id="KW-0689">Ribosomal protein</keyword>
<keyword id="KW-0694">RNA-binding</keyword>
<keyword id="KW-0699">rRNA-binding</keyword>
<name>RL23_CLOBH</name>
<sequence>MKLTNYDIIRRPLITEKTMASMADKKYTFVVDIHANKSQIKNAIETIFDVKVEDVKTARIMGKTKRVGVHIGKRPDYKKAIVKLTEDSKTIEFFEGL</sequence>
<comment type="function">
    <text evidence="1">One of the early assembly proteins it binds 23S rRNA. One of the proteins that surrounds the polypeptide exit tunnel on the outside of the ribosome. Forms the main docking site for trigger factor binding to the ribosome.</text>
</comment>
<comment type="subunit">
    <text evidence="1">Part of the 50S ribosomal subunit. Contacts protein L29, and trigger factor when it is bound to the ribosome.</text>
</comment>
<comment type="similarity">
    <text evidence="1">Belongs to the universal ribosomal protein uL23 family.</text>
</comment>
<organism>
    <name type="scientific">Clostridium botulinum (strain Hall / ATCC 3502 / NCTC 13319 / Type A)</name>
    <dbReference type="NCBI Taxonomy" id="441771"/>
    <lineage>
        <taxon>Bacteria</taxon>
        <taxon>Bacillati</taxon>
        <taxon>Bacillota</taxon>
        <taxon>Clostridia</taxon>
        <taxon>Eubacteriales</taxon>
        <taxon>Clostridiaceae</taxon>
        <taxon>Clostridium</taxon>
    </lineage>
</organism>
<evidence type="ECO:0000255" key="1">
    <source>
        <dbReference type="HAMAP-Rule" id="MF_01369"/>
    </source>
</evidence>
<evidence type="ECO:0000305" key="2"/>
<feature type="chain" id="PRO_1000068064" description="Large ribosomal subunit protein uL23">
    <location>
        <begin position="1"/>
        <end position="97"/>
    </location>
</feature>
<reference key="1">
    <citation type="journal article" date="2007" name="Genome Res.">
        <title>Genome sequence of a proteolytic (Group I) Clostridium botulinum strain Hall A and comparative analysis of the clostridial genomes.</title>
        <authorList>
            <person name="Sebaihia M."/>
            <person name="Peck M.W."/>
            <person name="Minton N.P."/>
            <person name="Thomson N.R."/>
            <person name="Holden M.T.G."/>
            <person name="Mitchell W.J."/>
            <person name="Carter A.T."/>
            <person name="Bentley S.D."/>
            <person name="Mason D.R."/>
            <person name="Crossman L."/>
            <person name="Paul C.J."/>
            <person name="Ivens A."/>
            <person name="Wells-Bennik M.H.J."/>
            <person name="Davis I.J."/>
            <person name="Cerdeno-Tarraga A.M."/>
            <person name="Churcher C."/>
            <person name="Quail M.A."/>
            <person name="Chillingworth T."/>
            <person name="Feltwell T."/>
            <person name="Fraser A."/>
            <person name="Goodhead I."/>
            <person name="Hance Z."/>
            <person name="Jagels K."/>
            <person name="Larke N."/>
            <person name="Maddison M."/>
            <person name="Moule S."/>
            <person name="Mungall K."/>
            <person name="Norbertczak H."/>
            <person name="Rabbinowitsch E."/>
            <person name="Sanders M."/>
            <person name="Simmonds M."/>
            <person name="White B."/>
            <person name="Whithead S."/>
            <person name="Parkhill J."/>
        </authorList>
    </citation>
    <scope>NUCLEOTIDE SEQUENCE [LARGE SCALE GENOMIC DNA]</scope>
    <source>
        <strain>Hall / ATCC 3502 / NCTC 13319 / Type A</strain>
    </source>
</reference>
<reference key="2">
    <citation type="journal article" date="2007" name="PLoS ONE">
        <title>Analysis of the neurotoxin complex genes in Clostridium botulinum A1-A4 and B1 strains: BoNT/A3, /Ba4 and /B1 clusters are located within plasmids.</title>
        <authorList>
            <person name="Smith T.J."/>
            <person name="Hill K.K."/>
            <person name="Foley B.T."/>
            <person name="Detter J.C."/>
            <person name="Munk A.C."/>
            <person name="Bruce D.C."/>
            <person name="Doggett N.A."/>
            <person name="Smith L.A."/>
            <person name="Marks J.D."/>
            <person name="Xie G."/>
            <person name="Brettin T.S."/>
        </authorList>
    </citation>
    <scope>NUCLEOTIDE SEQUENCE [LARGE SCALE GENOMIC DNA]</scope>
    <source>
        <strain>Hall / ATCC 3502 / NCTC 13319 / Type A</strain>
    </source>
</reference>
<protein>
    <recommendedName>
        <fullName evidence="1">Large ribosomal subunit protein uL23</fullName>
    </recommendedName>
    <alternativeName>
        <fullName evidence="2">50S ribosomal protein L23</fullName>
    </alternativeName>
</protein>
<accession>A5I7K4</accession>
<accession>A7G8T6</accession>